<dbReference type="EC" id="2.1.1.-"/>
<dbReference type="EMBL" id="CR380957">
    <property type="protein sequence ID" value="CAG61267.1"/>
    <property type="molecule type" value="Genomic_DNA"/>
</dbReference>
<dbReference type="RefSeq" id="XP_448306.1">
    <property type="nucleotide sequence ID" value="XM_448306.1"/>
</dbReference>
<dbReference type="SMR" id="Q6FN88"/>
<dbReference type="FunCoup" id="Q6FN88">
    <property type="interactions" value="1190"/>
</dbReference>
<dbReference type="STRING" id="284593.Q6FN88"/>
<dbReference type="EnsemblFungi" id="CAGL0K01859g-T">
    <property type="protein sequence ID" value="CAGL0K01859g-T-p1"/>
    <property type="gene ID" value="CAGL0K01859g"/>
</dbReference>
<dbReference type="KEGG" id="cgr:2890032"/>
<dbReference type="CGD" id="CAL0134523">
    <property type="gene designation" value="CAGL0K01859g"/>
</dbReference>
<dbReference type="VEuPathDB" id="FungiDB:B1J91_K01859g"/>
<dbReference type="VEuPathDB" id="FungiDB:CAGL0K01859g"/>
<dbReference type="eggNOG" id="KOG1596">
    <property type="taxonomic scope" value="Eukaryota"/>
</dbReference>
<dbReference type="HOGENOM" id="CLU_059055_1_0_1"/>
<dbReference type="InParanoid" id="Q6FN88"/>
<dbReference type="OMA" id="WNPNKSK"/>
<dbReference type="Proteomes" id="UP000002428">
    <property type="component" value="Chromosome K"/>
</dbReference>
<dbReference type="GO" id="GO:0031428">
    <property type="term" value="C:box C/D methylation guide snoRNP complex"/>
    <property type="evidence" value="ECO:0007669"/>
    <property type="project" value="EnsemblFungi"/>
</dbReference>
<dbReference type="GO" id="GO:0005730">
    <property type="term" value="C:nucleolus"/>
    <property type="evidence" value="ECO:0007669"/>
    <property type="project" value="UniProtKB-SubCell"/>
</dbReference>
<dbReference type="GO" id="GO:0032040">
    <property type="term" value="C:small-subunit processome"/>
    <property type="evidence" value="ECO:0007669"/>
    <property type="project" value="EnsemblFungi"/>
</dbReference>
<dbReference type="GO" id="GO:1990259">
    <property type="term" value="F:histone H2AQ104 methyltransferase activity"/>
    <property type="evidence" value="ECO:0007669"/>
    <property type="project" value="EnsemblFungi"/>
</dbReference>
<dbReference type="GO" id="GO:0003723">
    <property type="term" value="F:RNA binding"/>
    <property type="evidence" value="ECO:0007669"/>
    <property type="project" value="UniProtKB-KW"/>
</dbReference>
<dbReference type="GO" id="GO:0008649">
    <property type="term" value="F:rRNA methyltransferase activity"/>
    <property type="evidence" value="ECO:0007669"/>
    <property type="project" value="EnsemblFungi"/>
</dbReference>
<dbReference type="GO" id="GO:0000494">
    <property type="term" value="P:box C/D sno(s)RNA 3'-end processing"/>
    <property type="evidence" value="ECO:0007669"/>
    <property type="project" value="EnsemblFungi"/>
</dbReference>
<dbReference type="GO" id="GO:0006356">
    <property type="term" value="P:regulation of transcription by RNA polymerase I"/>
    <property type="evidence" value="ECO:0007669"/>
    <property type="project" value="EnsemblFungi"/>
</dbReference>
<dbReference type="GO" id="GO:0000452">
    <property type="term" value="P:snoRNA guided rRNA 2'-O-methylation"/>
    <property type="evidence" value="ECO:0007669"/>
    <property type="project" value="EnsemblFungi"/>
</dbReference>
<dbReference type="FunFam" id="3.30.200.20:FF:000056">
    <property type="entry name" value="Fibrillarin like 1"/>
    <property type="match status" value="1"/>
</dbReference>
<dbReference type="FunFam" id="3.40.50.150:FF:000001">
    <property type="entry name" value="Fibrillarin like 1"/>
    <property type="match status" value="1"/>
</dbReference>
<dbReference type="Gene3D" id="3.30.200.20">
    <property type="entry name" value="Phosphorylase Kinase, domain 1"/>
    <property type="match status" value="1"/>
</dbReference>
<dbReference type="Gene3D" id="3.40.50.150">
    <property type="entry name" value="Vaccinia Virus protein VP39"/>
    <property type="match status" value="1"/>
</dbReference>
<dbReference type="HAMAP" id="MF_00351">
    <property type="entry name" value="RNA_methyltransf_FlpA"/>
    <property type="match status" value="1"/>
</dbReference>
<dbReference type="InterPro" id="IPR000692">
    <property type="entry name" value="Fibrillarin"/>
</dbReference>
<dbReference type="InterPro" id="IPR020813">
    <property type="entry name" value="Fibrillarin_CS"/>
</dbReference>
<dbReference type="InterPro" id="IPR029063">
    <property type="entry name" value="SAM-dependent_MTases_sf"/>
</dbReference>
<dbReference type="NCBIfam" id="NF003276">
    <property type="entry name" value="PRK04266.1-2"/>
    <property type="match status" value="1"/>
</dbReference>
<dbReference type="PANTHER" id="PTHR10335:SF17">
    <property type="entry name" value="FIBRILLARIN"/>
    <property type="match status" value="1"/>
</dbReference>
<dbReference type="PANTHER" id="PTHR10335">
    <property type="entry name" value="RRNA 2-O-METHYLTRANSFERASE FIBRILLARIN"/>
    <property type="match status" value="1"/>
</dbReference>
<dbReference type="Pfam" id="PF01269">
    <property type="entry name" value="Fibrillarin"/>
    <property type="match status" value="1"/>
</dbReference>
<dbReference type="PIRSF" id="PIRSF006540">
    <property type="entry name" value="Nop17p"/>
    <property type="match status" value="1"/>
</dbReference>
<dbReference type="PRINTS" id="PR00052">
    <property type="entry name" value="FIBRILLARIN"/>
</dbReference>
<dbReference type="SMART" id="SM01206">
    <property type="entry name" value="Fibrillarin"/>
    <property type="match status" value="1"/>
</dbReference>
<dbReference type="SUPFAM" id="SSF53335">
    <property type="entry name" value="S-adenosyl-L-methionine-dependent methyltransferases"/>
    <property type="match status" value="1"/>
</dbReference>
<dbReference type="PROSITE" id="PS00566">
    <property type="entry name" value="FIBRILLARIN"/>
    <property type="match status" value="1"/>
</dbReference>
<accession>Q6FN88</accession>
<gene>
    <name type="primary">NOP1</name>
    <name type="ordered locus">CAGL0K01859g</name>
</gene>
<name>FBRL_CANGA</name>
<reference key="1">
    <citation type="journal article" date="2004" name="Nature">
        <title>Genome evolution in yeasts.</title>
        <authorList>
            <person name="Dujon B."/>
            <person name="Sherman D."/>
            <person name="Fischer G."/>
            <person name="Durrens P."/>
            <person name="Casaregola S."/>
            <person name="Lafontaine I."/>
            <person name="de Montigny J."/>
            <person name="Marck C."/>
            <person name="Neuveglise C."/>
            <person name="Talla E."/>
            <person name="Goffard N."/>
            <person name="Frangeul L."/>
            <person name="Aigle M."/>
            <person name="Anthouard V."/>
            <person name="Babour A."/>
            <person name="Barbe V."/>
            <person name="Barnay S."/>
            <person name="Blanchin S."/>
            <person name="Beckerich J.-M."/>
            <person name="Beyne E."/>
            <person name="Bleykasten C."/>
            <person name="Boisrame A."/>
            <person name="Boyer J."/>
            <person name="Cattolico L."/>
            <person name="Confanioleri F."/>
            <person name="de Daruvar A."/>
            <person name="Despons L."/>
            <person name="Fabre E."/>
            <person name="Fairhead C."/>
            <person name="Ferry-Dumazet H."/>
            <person name="Groppi A."/>
            <person name="Hantraye F."/>
            <person name="Hennequin C."/>
            <person name="Jauniaux N."/>
            <person name="Joyet P."/>
            <person name="Kachouri R."/>
            <person name="Kerrest A."/>
            <person name="Koszul R."/>
            <person name="Lemaire M."/>
            <person name="Lesur I."/>
            <person name="Ma L."/>
            <person name="Muller H."/>
            <person name="Nicaud J.-M."/>
            <person name="Nikolski M."/>
            <person name="Oztas S."/>
            <person name="Ozier-Kalogeropoulos O."/>
            <person name="Pellenz S."/>
            <person name="Potier S."/>
            <person name="Richard G.-F."/>
            <person name="Straub M.-L."/>
            <person name="Suleau A."/>
            <person name="Swennen D."/>
            <person name="Tekaia F."/>
            <person name="Wesolowski-Louvel M."/>
            <person name="Westhof E."/>
            <person name="Wirth B."/>
            <person name="Zeniou-Meyer M."/>
            <person name="Zivanovic Y."/>
            <person name="Bolotin-Fukuhara M."/>
            <person name="Thierry A."/>
            <person name="Bouchier C."/>
            <person name="Caudron B."/>
            <person name="Scarpelli C."/>
            <person name="Gaillardin C."/>
            <person name="Weissenbach J."/>
            <person name="Wincker P."/>
            <person name="Souciet J.-L."/>
        </authorList>
    </citation>
    <scope>NUCLEOTIDE SEQUENCE [LARGE SCALE GENOMIC DNA]</scope>
    <source>
        <strain>ATCC 2001 / BCRC 20586 / JCM 3761 / NBRC 0622 / NRRL Y-65 / CBS 138</strain>
    </source>
</reference>
<sequence>MSFRPGSRGGARGGRGGSRGGFGGRGGSRGGFGGRGGSRGGSRGGFGGRGGSRGGPRGGSRGGPRGGARGGARGGAKGGAKVVIEPHKHDGVYIARGKEDLLVTKNMAPGESVYGEKRVSVEEPSKEDGVPPTKVEYRVWNPFRSKLAAGIMGGLDELFIAPGKKVLYLGAASGTSVSHVSDVVGPEGVVYAVEFSHRPGRELISMAKKRPNVIPIIEDARHPQKYRMLVGMVDAVFADVAQPDQARIIALNSHMFLKDQGGVVISIKANCIDSTVDAETVFAREVQKLREEKIKPLEQLTLEPYERDHCIVIGRYMRSGLKK</sequence>
<keyword id="KW-0488">Methylation</keyword>
<keyword id="KW-0489">Methyltransferase</keyword>
<keyword id="KW-0539">Nucleus</keyword>
<keyword id="KW-1185">Reference proteome</keyword>
<keyword id="KW-0687">Ribonucleoprotein</keyword>
<keyword id="KW-0694">RNA-binding</keyword>
<keyword id="KW-0698">rRNA processing</keyword>
<keyword id="KW-0949">S-adenosyl-L-methionine</keyword>
<keyword id="KW-0808">Transferase</keyword>
<protein>
    <recommendedName>
        <fullName>rRNA 2'-O-methyltransferase fibrillarin</fullName>
        <ecNumber>2.1.1.-</ecNumber>
    </recommendedName>
    <alternativeName>
        <fullName>Histone-glutamine methyltransferase</fullName>
    </alternativeName>
</protein>
<feature type="chain" id="PRO_0000148522" description="rRNA 2'-O-methyltransferase fibrillarin">
    <location>
        <begin position="1"/>
        <end position="323"/>
    </location>
</feature>
<feature type="region of interest" description="Disordered" evidence="2">
    <location>
        <begin position="1"/>
        <end position="80"/>
    </location>
</feature>
<feature type="compositionally biased region" description="Gly residues" evidence="2">
    <location>
        <begin position="7"/>
        <end position="78"/>
    </location>
</feature>
<feature type="binding site" evidence="1">
    <location>
        <begin position="175"/>
        <end position="176"/>
    </location>
    <ligand>
        <name>S-adenosyl-L-methionine</name>
        <dbReference type="ChEBI" id="CHEBI:59789"/>
    </ligand>
</feature>
<feature type="binding site" evidence="1">
    <location>
        <begin position="194"/>
        <end position="195"/>
    </location>
    <ligand>
        <name>S-adenosyl-L-methionine</name>
        <dbReference type="ChEBI" id="CHEBI:59789"/>
    </ligand>
</feature>
<feature type="binding site" evidence="1">
    <location>
        <begin position="219"/>
        <end position="220"/>
    </location>
    <ligand>
        <name>S-adenosyl-L-methionine</name>
        <dbReference type="ChEBI" id="CHEBI:59789"/>
    </ligand>
</feature>
<feature type="binding site" evidence="1">
    <location>
        <begin position="239"/>
        <end position="242"/>
    </location>
    <ligand>
        <name>S-adenosyl-L-methionine</name>
        <dbReference type="ChEBI" id="CHEBI:59789"/>
    </ligand>
</feature>
<feature type="modified residue" description="Asymmetric dimethylarginine" evidence="1">
    <location>
        <position position="8"/>
    </location>
</feature>
<feature type="modified residue" description="Asymmetric dimethylarginine" evidence="1">
    <location>
        <position position="12"/>
    </location>
</feature>
<feature type="modified residue" description="Asymmetric dimethylarginine" evidence="1">
    <location>
        <position position="15"/>
    </location>
</feature>
<feature type="modified residue" description="Asymmetric dimethylarginine" evidence="1">
    <location>
        <position position="19"/>
    </location>
</feature>
<feature type="modified residue" description="Asymmetric dimethylarginine" evidence="1">
    <location>
        <position position="25"/>
    </location>
</feature>
<feature type="modified residue" description="Asymmetric dimethylarginine" evidence="1">
    <location>
        <position position="29"/>
    </location>
</feature>
<feature type="modified residue" description="Asymmetric dimethylarginine" evidence="1">
    <location>
        <position position="35"/>
    </location>
</feature>
<feature type="modified residue" description="Asymmetric dimethylarginine" evidence="1">
    <location>
        <position position="39"/>
    </location>
</feature>
<feature type="modified residue" description="Asymmetric dimethylarginine" evidence="1">
    <location>
        <position position="43"/>
    </location>
</feature>
<feature type="modified residue" description="Asymmetric dimethylarginine" evidence="1">
    <location>
        <position position="49"/>
    </location>
</feature>
<feature type="modified residue" description="Asymmetric dimethylarginine" evidence="1">
    <location>
        <position position="53"/>
    </location>
</feature>
<feature type="modified residue" description="Asymmetric dimethylarginine" evidence="1">
    <location>
        <position position="57"/>
    </location>
</feature>
<feature type="modified residue" description="Asymmetric dimethylarginine" evidence="1">
    <location>
        <position position="61"/>
    </location>
</feature>
<feature type="modified residue" description="Asymmetric dimethylarginine" evidence="1">
    <location>
        <position position="65"/>
    </location>
</feature>
<feature type="modified residue" description="Asymmetric dimethylarginine" evidence="1">
    <location>
        <position position="69"/>
    </location>
</feature>
<feature type="modified residue" description="Asymmetric dimethylarginine" evidence="1">
    <location>
        <position position="73"/>
    </location>
</feature>
<comment type="function">
    <text evidence="1">S-adenosyl-L-methionine-dependent methyltransferase that has the ability to methylate both RNAs and proteins. Involved in pre-rRNA processing. Utilizes the methyl donor S-adenosyl-L-methionine to catalyze the site-specific 2'-hydroxyl methylation of ribose moieties in pre-ribosomal RNA. Site specificity is provided by a guide RNA that base pairs with the substrate. Methylation occurs at a characteristic distance from the sequence involved in base pairing with the guide RNA. Also acts as a protein methyltransferase by mediating methylation of 'Gln-105' of histone H2A (H2AQ105me), a modification that impairs binding of the FACT complex and is specifically present at 35S ribosomal DNA locus (By similarity).</text>
</comment>
<comment type="catalytic activity">
    <reaction>
        <text>L-glutaminyl-[histone H2A] + S-adenosyl-L-methionine = N(5)-methyl-L-glutaminyl-[histone H2A] + S-adenosyl-L-homocysteine + H(+)</text>
        <dbReference type="Rhea" id="RHEA:50904"/>
        <dbReference type="Rhea" id="RHEA-COMP:12837"/>
        <dbReference type="Rhea" id="RHEA-COMP:12839"/>
        <dbReference type="ChEBI" id="CHEBI:15378"/>
        <dbReference type="ChEBI" id="CHEBI:30011"/>
        <dbReference type="ChEBI" id="CHEBI:57856"/>
        <dbReference type="ChEBI" id="CHEBI:59789"/>
        <dbReference type="ChEBI" id="CHEBI:61891"/>
    </reaction>
</comment>
<comment type="subunit">
    <text evidence="1">Component of box C/D small nucleolar ribonucleoprotein (snoRNP) particles that contain SNU13, NOP1, SIK1/NOP56 and NOP58, plus a guide RNA.</text>
</comment>
<comment type="subcellular location">
    <subcellularLocation>
        <location evidence="1">Nucleus</location>
        <location evidence="1">Nucleolus</location>
    </subcellularLocation>
    <text evidence="1">Fibrillar region of the nucleolus.</text>
</comment>
<comment type="PTM">
    <text evidence="1">By homology to other fibrillarins, some or all of the N-terminal domain arginines are modified to asymmetric dimethylarginine (DMA).</text>
</comment>
<comment type="similarity">
    <text evidence="3">Belongs to the methyltransferase superfamily. Fibrillarin family.</text>
</comment>
<proteinExistence type="inferred from homology"/>
<evidence type="ECO:0000250" key="1"/>
<evidence type="ECO:0000256" key="2">
    <source>
        <dbReference type="SAM" id="MobiDB-lite"/>
    </source>
</evidence>
<evidence type="ECO:0000305" key="3"/>
<organism>
    <name type="scientific">Candida glabrata (strain ATCC 2001 / BCRC 20586 / JCM 3761 / NBRC 0622 / NRRL Y-65 / CBS 138)</name>
    <name type="common">Yeast</name>
    <name type="synonym">Nakaseomyces glabratus</name>
    <dbReference type="NCBI Taxonomy" id="284593"/>
    <lineage>
        <taxon>Eukaryota</taxon>
        <taxon>Fungi</taxon>
        <taxon>Dikarya</taxon>
        <taxon>Ascomycota</taxon>
        <taxon>Saccharomycotina</taxon>
        <taxon>Saccharomycetes</taxon>
        <taxon>Saccharomycetales</taxon>
        <taxon>Saccharomycetaceae</taxon>
        <taxon>Nakaseomyces</taxon>
    </lineage>
</organism>